<protein>
    <recommendedName>
        <fullName evidence="1">2-C-methyl-D-erythritol 4-phosphate cytidylyltransferase</fullName>
        <ecNumber evidence="1">2.7.7.60</ecNumber>
    </recommendedName>
    <alternativeName>
        <fullName evidence="1">4-diphosphocytidyl-2C-methyl-D-erythritol synthase</fullName>
    </alternativeName>
    <alternativeName>
        <fullName evidence="1">MEP cytidylyltransferase</fullName>
        <shortName evidence="1">MCT</shortName>
    </alternativeName>
</protein>
<organism>
    <name type="scientific">Bacillus thuringiensis (strain Al Hakam)</name>
    <dbReference type="NCBI Taxonomy" id="412694"/>
    <lineage>
        <taxon>Bacteria</taxon>
        <taxon>Bacillati</taxon>
        <taxon>Bacillota</taxon>
        <taxon>Bacilli</taxon>
        <taxon>Bacillales</taxon>
        <taxon>Bacillaceae</taxon>
        <taxon>Bacillus</taxon>
        <taxon>Bacillus cereus group</taxon>
    </lineage>
</organism>
<dbReference type="EC" id="2.7.7.60" evidence="1"/>
<dbReference type="EMBL" id="CP000485">
    <property type="protein sequence ID" value="ABK83500.1"/>
    <property type="molecule type" value="Genomic_DNA"/>
</dbReference>
<dbReference type="RefSeq" id="WP_000288292.1">
    <property type="nucleotide sequence ID" value="NC_008600.1"/>
</dbReference>
<dbReference type="SMR" id="A0R8F7"/>
<dbReference type="GeneID" id="45020130"/>
<dbReference type="KEGG" id="btl:BALH_0085"/>
<dbReference type="HOGENOM" id="CLU_061281_2_2_9"/>
<dbReference type="UniPathway" id="UPA00056">
    <property type="reaction ID" value="UER00093"/>
</dbReference>
<dbReference type="GO" id="GO:0050518">
    <property type="term" value="F:2-C-methyl-D-erythritol 4-phosphate cytidylyltransferase activity"/>
    <property type="evidence" value="ECO:0007669"/>
    <property type="project" value="UniProtKB-UniRule"/>
</dbReference>
<dbReference type="GO" id="GO:0019288">
    <property type="term" value="P:isopentenyl diphosphate biosynthetic process, methylerythritol 4-phosphate pathway"/>
    <property type="evidence" value="ECO:0007669"/>
    <property type="project" value="UniProtKB-UniRule"/>
</dbReference>
<dbReference type="CDD" id="cd02516">
    <property type="entry name" value="CDP-ME_synthetase"/>
    <property type="match status" value="1"/>
</dbReference>
<dbReference type="FunFam" id="3.90.550.10:FF:000003">
    <property type="entry name" value="2-C-methyl-D-erythritol 4-phosphate cytidylyltransferase"/>
    <property type="match status" value="1"/>
</dbReference>
<dbReference type="Gene3D" id="3.90.550.10">
    <property type="entry name" value="Spore Coat Polysaccharide Biosynthesis Protein SpsA, Chain A"/>
    <property type="match status" value="1"/>
</dbReference>
<dbReference type="HAMAP" id="MF_00108">
    <property type="entry name" value="IspD"/>
    <property type="match status" value="1"/>
</dbReference>
<dbReference type="InterPro" id="IPR001228">
    <property type="entry name" value="IspD"/>
</dbReference>
<dbReference type="InterPro" id="IPR034683">
    <property type="entry name" value="IspD/TarI"/>
</dbReference>
<dbReference type="InterPro" id="IPR050088">
    <property type="entry name" value="IspD/TarI_cytidylyltransf_bact"/>
</dbReference>
<dbReference type="InterPro" id="IPR018294">
    <property type="entry name" value="ISPD_synthase_CS"/>
</dbReference>
<dbReference type="InterPro" id="IPR029044">
    <property type="entry name" value="Nucleotide-diphossugar_trans"/>
</dbReference>
<dbReference type="NCBIfam" id="TIGR00453">
    <property type="entry name" value="ispD"/>
    <property type="match status" value="1"/>
</dbReference>
<dbReference type="PANTHER" id="PTHR32125">
    <property type="entry name" value="2-C-METHYL-D-ERYTHRITOL 4-PHOSPHATE CYTIDYLYLTRANSFERASE, CHLOROPLASTIC"/>
    <property type="match status" value="1"/>
</dbReference>
<dbReference type="PANTHER" id="PTHR32125:SF4">
    <property type="entry name" value="2-C-METHYL-D-ERYTHRITOL 4-PHOSPHATE CYTIDYLYLTRANSFERASE, CHLOROPLASTIC"/>
    <property type="match status" value="1"/>
</dbReference>
<dbReference type="Pfam" id="PF01128">
    <property type="entry name" value="IspD"/>
    <property type="match status" value="1"/>
</dbReference>
<dbReference type="SUPFAM" id="SSF53448">
    <property type="entry name" value="Nucleotide-diphospho-sugar transferases"/>
    <property type="match status" value="1"/>
</dbReference>
<dbReference type="PROSITE" id="PS01295">
    <property type="entry name" value="ISPD"/>
    <property type="match status" value="1"/>
</dbReference>
<proteinExistence type="inferred from homology"/>
<accession>A0R8F7</accession>
<sequence>MYTLIIPAAGQGKRMGAGKNKLFLLINEVPIIVHTLRAFEKDKACKNIIMAINEEERPYFEELMQKYPVEKPVQFIQGGAERQDSVYNAIQHTTDVEYVLVHDGARPFVTNKVIQDVLTAAEKYGASICAVPVKDTVKKVEQGVVVETVERSQLKAVQTPQGFSVSLLLEAHRSAKQSCFLGTDDASLVERIGKQVGVVEGSYYNIKVTTPEDLLIAESFLHVQKK</sequence>
<keyword id="KW-0414">Isoprene biosynthesis</keyword>
<keyword id="KW-0548">Nucleotidyltransferase</keyword>
<keyword id="KW-0808">Transferase</keyword>
<reference key="1">
    <citation type="journal article" date="2007" name="J. Bacteriol.">
        <title>The complete genome sequence of Bacillus thuringiensis Al Hakam.</title>
        <authorList>
            <person name="Challacombe J.F."/>
            <person name="Altherr M.R."/>
            <person name="Xie G."/>
            <person name="Bhotika S.S."/>
            <person name="Brown N."/>
            <person name="Bruce D."/>
            <person name="Campbell C.S."/>
            <person name="Campbell M.L."/>
            <person name="Chen J."/>
            <person name="Chertkov O."/>
            <person name="Cleland C."/>
            <person name="Dimitrijevic M."/>
            <person name="Doggett N.A."/>
            <person name="Fawcett J.J."/>
            <person name="Glavina T."/>
            <person name="Goodwin L.A."/>
            <person name="Green L.D."/>
            <person name="Han C.S."/>
            <person name="Hill K.K."/>
            <person name="Hitchcock P."/>
            <person name="Jackson P.J."/>
            <person name="Keim P."/>
            <person name="Kewalramani A.R."/>
            <person name="Longmire J."/>
            <person name="Lucas S."/>
            <person name="Malfatti S."/>
            <person name="Martinez D."/>
            <person name="McMurry K."/>
            <person name="Meincke L.J."/>
            <person name="Misra M."/>
            <person name="Moseman B.L."/>
            <person name="Mundt M."/>
            <person name="Munk A.C."/>
            <person name="Okinaka R.T."/>
            <person name="Parson-Quintana B."/>
            <person name="Reilly L.P."/>
            <person name="Richardson P."/>
            <person name="Robinson D.L."/>
            <person name="Saunders E."/>
            <person name="Tapia R."/>
            <person name="Tesmer J.G."/>
            <person name="Thayer N."/>
            <person name="Thompson L.S."/>
            <person name="Tice H."/>
            <person name="Ticknor L.O."/>
            <person name="Wills P.L."/>
            <person name="Gilna P."/>
            <person name="Brettin T.S."/>
        </authorList>
    </citation>
    <scope>NUCLEOTIDE SEQUENCE [LARGE SCALE GENOMIC DNA]</scope>
    <source>
        <strain>Al Hakam</strain>
    </source>
</reference>
<gene>
    <name evidence="1" type="primary">ispD</name>
    <name type="ordered locus">BALH_0085</name>
</gene>
<evidence type="ECO:0000255" key="1">
    <source>
        <dbReference type="HAMAP-Rule" id="MF_00108"/>
    </source>
</evidence>
<comment type="function">
    <text evidence="1">Catalyzes the formation of 4-diphosphocytidyl-2-C-methyl-D-erythritol from CTP and 2-C-methyl-D-erythritol 4-phosphate (MEP).</text>
</comment>
<comment type="catalytic activity">
    <reaction evidence="1">
        <text>2-C-methyl-D-erythritol 4-phosphate + CTP + H(+) = 4-CDP-2-C-methyl-D-erythritol + diphosphate</text>
        <dbReference type="Rhea" id="RHEA:13429"/>
        <dbReference type="ChEBI" id="CHEBI:15378"/>
        <dbReference type="ChEBI" id="CHEBI:33019"/>
        <dbReference type="ChEBI" id="CHEBI:37563"/>
        <dbReference type="ChEBI" id="CHEBI:57823"/>
        <dbReference type="ChEBI" id="CHEBI:58262"/>
        <dbReference type="EC" id="2.7.7.60"/>
    </reaction>
</comment>
<comment type="pathway">
    <text evidence="1">Isoprenoid biosynthesis; isopentenyl diphosphate biosynthesis via DXP pathway; isopentenyl diphosphate from 1-deoxy-D-xylulose 5-phosphate: step 2/6.</text>
</comment>
<comment type="similarity">
    <text evidence="1">Belongs to the IspD/TarI cytidylyltransferase family. IspD subfamily.</text>
</comment>
<name>ISPD_BACAH</name>
<feature type="chain" id="PRO_1000022898" description="2-C-methyl-D-erythritol 4-phosphate cytidylyltransferase">
    <location>
        <begin position="1"/>
        <end position="226"/>
    </location>
</feature>
<feature type="site" description="Transition state stabilizer" evidence="1">
    <location>
        <position position="14"/>
    </location>
</feature>
<feature type="site" description="Transition state stabilizer" evidence="1">
    <location>
        <position position="21"/>
    </location>
</feature>
<feature type="site" description="Positions MEP for the nucleophilic attack" evidence="1">
    <location>
        <position position="151"/>
    </location>
</feature>
<feature type="site" description="Positions MEP for the nucleophilic attack" evidence="1">
    <location>
        <position position="207"/>
    </location>
</feature>